<protein>
    <recommendedName>
        <fullName evidence="1">Uroporphyrinogen decarboxylase</fullName>
        <shortName evidence="1">UPD</shortName>
        <shortName evidence="1">URO-D</shortName>
        <ecNumber evidence="1">4.1.1.37</ecNumber>
    </recommendedName>
</protein>
<proteinExistence type="inferred from homology"/>
<gene>
    <name evidence="1" type="primary">hemE</name>
    <name type="ordered locus">SAS1755</name>
</gene>
<accession>Q6G8A2</accession>
<name>DCUP_STAAS</name>
<evidence type="ECO:0000255" key="1">
    <source>
        <dbReference type="HAMAP-Rule" id="MF_00218"/>
    </source>
</evidence>
<dbReference type="EC" id="4.1.1.37" evidence="1"/>
<dbReference type="EMBL" id="BX571857">
    <property type="protein sequence ID" value="CAG43559.1"/>
    <property type="molecule type" value="Genomic_DNA"/>
</dbReference>
<dbReference type="RefSeq" id="WP_000233526.1">
    <property type="nucleotide sequence ID" value="NC_002953.3"/>
</dbReference>
<dbReference type="SMR" id="Q6G8A2"/>
<dbReference type="KEGG" id="sas:SAS1755"/>
<dbReference type="HOGENOM" id="CLU_040933_0_1_9"/>
<dbReference type="UniPathway" id="UPA00251">
    <property type="reaction ID" value="UER00321"/>
</dbReference>
<dbReference type="GO" id="GO:0005829">
    <property type="term" value="C:cytosol"/>
    <property type="evidence" value="ECO:0007669"/>
    <property type="project" value="TreeGrafter"/>
</dbReference>
<dbReference type="GO" id="GO:0004853">
    <property type="term" value="F:uroporphyrinogen decarboxylase activity"/>
    <property type="evidence" value="ECO:0007669"/>
    <property type="project" value="UniProtKB-UniRule"/>
</dbReference>
<dbReference type="GO" id="GO:0006782">
    <property type="term" value="P:protoporphyrinogen IX biosynthetic process"/>
    <property type="evidence" value="ECO:0007669"/>
    <property type="project" value="UniProtKB-UniRule"/>
</dbReference>
<dbReference type="CDD" id="cd00717">
    <property type="entry name" value="URO-D"/>
    <property type="match status" value="1"/>
</dbReference>
<dbReference type="FunFam" id="3.20.20.210:FF:000005">
    <property type="entry name" value="Uroporphyrinogen decarboxylase"/>
    <property type="match status" value="1"/>
</dbReference>
<dbReference type="Gene3D" id="3.20.20.210">
    <property type="match status" value="1"/>
</dbReference>
<dbReference type="HAMAP" id="MF_00218">
    <property type="entry name" value="URO_D"/>
    <property type="match status" value="1"/>
</dbReference>
<dbReference type="InterPro" id="IPR038071">
    <property type="entry name" value="UROD/MetE-like_sf"/>
</dbReference>
<dbReference type="InterPro" id="IPR006361">
    <property type="entry name" value="Uroporphyrinogen_deCO2ase_HemE"/>
</dbReference>
<dbReference type="InterPro" id="IPR000257">
    <property type="entry name" value="Uroporphyrinogen_deCOase"/>
</dbReference>
<dbReference type="NCBIfam" id="TIGR01464">
    <property type="entry name" value="hemE"/>
    <property type="match status" value="1"/>
</dbReference>
<dbReference type="PANTHER" id="PTHR21091">
    <property type="entry name" value="METHYLTETRAHYDROFOLATE:HOMOCYSTEINE METHYLTRANSFERASE RELATED"/>
    <property type="match status" value="1"/>
</dbReference>
<dbReference type="PANTHER" id="PTHR21091:SF169">
    <property type="entry name" value="UROPORPHYRINOGEN DECARBOXYLASE"/>
    <property type="match status" value="1"/>
</dbReference>
<dbReference type="Pfam" id="PF01208">
    <property type="entry name" value="URO-D"/>
    <property type="match status" value="1"/>
</dbReference>
<dbReference type="SUPFAM" id="SSF51726">
    <property type="entry name" value="UROD/MetE-like"/>
    <property type="match status" value="1"/>
</dbReference>
<dbReference type="PROSITE" id="PS00906">
    <property type="entry name" value="UROD_1"/>
    <property type="match status" value="1"/>
</dbReference>
<dbReference type="PROSITE" id="PS00907">
    <property type="entry name" value="UROD_2"/>
    <property type="match status" value="1"/>
</dbReference>
<sequence length="345" mass="39352">MVHNKNNTILKMIKGEETSHTPVWFMRQAGRSQPEYRKLKEKYSLFDITHQPELCAYVTHLPVDNYHTDAAILYKDIMTPLKPIGVDVEIKSGIGPVIHNPIKTIQDVEKLSQIDPERDVPYVLDTIKLLTEEKLNVPLIGFTGAPFTLASYMIEGGPSKNYNFTKAMMYRDEATWFALMNHLVDVSVKYVTAQVEAGAELIQIFDSWVGALNVEDYRRYIKPHMIRLISEVKEKHDVPVILFGVGASHLINEWNDLPIDVLGLDWRTSINQAQQLGVTKTLQGNLDPSILLAPWNVIEERLKPILDQGMENGKHIFNLGHGVFPEVQPETLRKVSEFVHTYTQR</sequence>
<organism>
    <name type="scientific">Staphylococcus aureus (strain MSSA476)</name>
    <dbReference type="NCBI Taxonomy" id="282459"/>
    <lineage>
        <taxon>Bacteria</taxon>
        <taxon>Bacillati</taxon>
        <taxon>Bacillota</taxon>
        <taxon>Bacilli</taxon>
        <taxon>Bacillales</taxon>
        <taxon>Staphylococcaceae</taxon>
        <taxon>Staphylococcus</taxon>
    </lineage>
</organism>
<comment type="function">
    <text evidence="1">Catalyzes the decarboxylation of four acetate groups of uroporphyrinogen-III to yield coproporphyrinogen-III.</text>
</comment>
<comment type="catalytic activity">
    <reaction evidence="1">
        <text>uroporphyrinogen III + 4 H(+) = coproporphyrinogen III + 4 CO2</text>
        <dbReference type="Rhea" id="RHEA:19865"/>
        <dbReference type="ChEBI" id="CHEBI:15378"/>
        <dbReference type="ChEBI" id="CHEBI:16526"/>
        <dbReference type="ChEBI" id="CHEBI:57308"/>
        <dbReference type="ChEBI" id="CHEBI:57309"/>
        <dbReference type="EC" id="4.1.1.37"/>
    </reaction>
</comment>
<comment type="pathway">
    <text evidence="1">Porphyrin-containing compound metabolism; protoporphyrin-IX biosynthesis; coproporphyrinogen-III from 5-aminolevulinate: step 4/4.</text>
</comment>
<comment type="subunit">
    <text evidence="1">Homodimer.</text>
</comment>
<comment type="subcellular location">
    <subcellularLocation>
        <location evidence="1">Cytoplasm</location>
    </subcellularLocation>
</comment>
<comment type="similarity">
    <text evidence="1">Belongs to the uroporphyrinogen decarboxylase family.</text>
</comment>
<keyword id="KW-0963">Cytoplasm</keyword>
<keyword id="KW-0210">Decarboxylase</keyword>
<keyword id="KW-0456">Lyase</keyword>
<keyword id="KW-0627">Porphyrin biosynthesis</keyword>
<reference key="1">
    <citation type="journal article" date="2004" name="Proc. Natl. Acad. Sci. U.S.A.">
        <title>Complete genomes of two clinical Staphylococcus aureus strains: evidence for the rapid evolution of virulence and drug resistance.</title>
        <authorList>
            <person name="Holden M.T.G."/>
            <person name="Feil E.J."/>
            <person name="Lindsay J.A."/>
            <person name="Peacock S.J."/>
            <person name="Day N.P.J."/>
            <person name="Enright M.C."/>
            <person name="Foster T.J."/>
            <person name="Moore C.E."/>
            <person name="Hurst L."/>
            <person name="Atkin R."/>
            <person name="Barron A."/>
            <person name="Bason N."/>
            <person name="Bentley S.D."/>
            <person name="Chillingworth C."/>
            <person name="Chillingworth T."/>
            <person name="Churcher C."/>
            <person name="Clark L."/>
            <person name="Corton C."/>
            <person name="Cronin A."/>
            <person name="Doggett J."/>
            <person name="Dowd L."/>
            <person name="Feltwell T."/>
            <person name="Hance Z."/>
            <person name="Harris B."/>
            <person name="Hauser H."/>
            <person name="Holroyd S."/>
            <person name="Jagels K."/>
            <person name="James K.D."/>
            <person name="Lennard N."/>
            <person name="Line A."/>
            <person name="Mayes R."/>
            <person name="Moule S."/>
            <person name="Mungall K."/>
            <person name="Ormond D."/>
            <person name="Quail M.A."/>
            <person name="Rabbinowitsch E."/>
            <person name="Rutherford K.M."/>
            <person name="Sanders M."/>
            <person name="Sharp S."/>
            <person name="Simmonds M."/>
            <person name="Stevens K."/>
            <person name="Whitehead S."/>
            <person name="Barrell B.G."/>
            <person name="Spratt B.G."/>
            <person name="Parkhill J."/>
        </authorList>
    </citation>
    <scope>NUCLEOTIDE SEQUENCE [LARGE SCALE GENOMIC DNA]</scope>
    <source>
        <strain>MSSA476</strain>
    </source>
</reference>
<feature type="chain" id="PRO_0000187643" description="Uroporphyrinogen decarboxylase">
    <location>
        <begin position="1"/>
        <end position="345"/>
    </location>
</feature>
<feature type="binding site" evidence="1">
    <location>
        <begin position="27"/>
        <end position="31"/>
    </location>
    <ligand>
        <name>substrate</name>
    </ligand>
</feature>
<feature type="binding site" evidence="1">
    <location>
        <position position="46"/>
    </location>
    <ligand>
        <name>substrate</name>
    </ligand>
</feature>
<feature type="binding site" evidence="1">
    <location>
        <position position="76"/>
    </location>
    <ligand>
        <name>substrate</name>
    </ligand>
</feature>
<feature type="binding site" evidence="1">
    <location>
        <position position="152"/>
    </location>
    <ligand>
        <name>substrate</name>
    </ligand>
</feature>
<feature type="binding site" evidence="1">
    <location>
        <position position="207"/>
    </location>
    <ligand>
        <name>substrate</name>
    </ligand>
</feature>
<feature type="binding site" evidence="1">
    <location>
        <position position="321"/>
    </location>
    <ligand>
        <name>substrate</name>
    </ligand>
</feature>
<feature type="site" description="Transition state stabilizer" evidence="1">
    <location>
        <position position="76"/>
    </location>
</feature>